<sequence length="249" mass="28072">MSYDRAITVFSPDGHLFQVEYAQEAVKKGSTAVGVRGKDIVVLGVEKKSVAKLQDERTVRKICALDDNVCMAFAGLTADARIVINRARVECQSHRLTVEDPVTVEYITRYIASLKQRYTQSKRRRPFGISALIVGFDFDGTPRLYQTDPSGTYHAWKANAIGRGAKSVRVEFEKNYTDEAIETDDLTIKLVIKALLEVVQSGGKNIELAVMRRDQPLKILTSPEEIEKYVAEIEKEKEENEKKKQKKTS</sequence>
<reference key="1">
    <citation type="journal article" date="1997" name="Biochem. Biophys. Res. Commun.">
        <title>Differential expression of a proteasomal subunit during chick development.</title>
        <authorList>
            <person name="Hutson M.R."/>
            <person name="Rhodes M.R."/>
            <person name="Kirby M.L."/>
        </authorList>
    </citation>
    <scope>NUCLEOTIDE SEQUENCE [MRNA]</scope>
    <source>
        <tissue>Pharyngeal arch</tissue>
    </source>
</reference>
<protein>
    <recommendedName>
        <fullName>Proteasome subunit alpha type-7</fullName>
    </recommendedName>
    <alternativeName>
        <fullName>GPRO-28</fullName>
    </alternativeName>
</protein>
<organism>
    <name type="scientific">Gallus gallus</name>
    <name type="common">Chicken</name>
    <dbReference type="NCBI Taxonomy" id="9031"/>
    <lineage>
        <taxon>Eukaryota</taxon>
        <taxon>Metazoa</taxon>
        <taxon>Chordata</taxon>
        <taxon>Craniata</taxon>
        <taxon>Vertebrata</taxon>
        <taxon>Euteleostomi</taxon>
        <taxon>Archelosauria</taxon>
        <taxon>Archosauria</taxon>
        <taxon>Dinosauria</taxon>
        <taxon>Saurischia</taxon>
        <taxon>Theropoda</taxon>
        <taxon>Coelurosauria</taxon>
        <taxon>Aves</taxon>
        <taxon>Neognathae</taxon>
        <taxon>Galloanserae</taxon>
        <taxon>Galliformes</taxon>
        <taxon>Phasianidae</taxon>
        <taxon>Phasianinae</taxon>
        <taxon>Gallus</taxon>
    </lineage>
</organism>
<keyword id="KW-0963">Cytoplasm</keyword>
<keyword id="KW-0539">Nucleus</keyword>
<keyword id="KW-0647">Proteasome</keyword>
<keyword id="KW-1185">Reference proteome</keyword>
<name>PSA7_CHICK</name>
<accession>O13268</accession>
<dbReference type="EMBL" id="U09226">
    <property type="protein sequence ID" value="AAC60206.1"/>
    <property type="molecule type" value="mRNA"/>
</dbReference>
<dbReference type="PIR" id="JC5510">
    <property type="entry name" value="JC5510"/>
</dbReference>
<dbReference type="RefSeq" id="NP_989944.1">
    <property type="nucleotide sequence ID" value="NM_204613.1"/>
</dbReference>
<dbReference type="SMR" id="O13268"/>
<dbReference type="BioGRID" id="675608">
    <property type="interactions" value="1"/>
</dbReference>
<dbReference type="FunCoup" id="O13268">
    <property type="interactions" value="1756"/>
</dbReference>
<dbReference type="IntAct" id="O13268">
    <property type="interactions" value="1"/>
</dbReference>
<dbReference type="STRING" id="9031.ENSGALP00000053112"/>
<dbReference type="MEROPS" id="T01.974"/>
<dbReference type="PaxDb" id="9031-ENSGALP00000042455"/>
<dbReference type="GeneID" id="395318"/>
<dbReference type="KEGG" id="gga:395318"/>
<dbReference type="CTD" id="5688"/>
<dbReference type="VEuPathDB" id="HostDB:geneid_395318"/>
<dbReference type="eggNOG" id="KOG0183">
    <property type="taxonomic scope" value="Eukaryota"/>
</dbReference>
<dbReference type="InParanoid" id="O13268"/>
<dbReference type="OrthoDB" id="3145928at2759"/>
<dbReference type="PhylomeDB" id="O13268"/>
<dbReference type="PRO" id="PR:O13268"/>
<dbReference type="Proteomes" id="UP000000539">
    <property type="component" value="Unassembled WGS sequence"/>
</dbReference>
<dbReference type="GO" id="GO:0005737">
    <property type="term" value="C:cytoplasm"/>
    <property type="evidence" value="ECO:0007669"/>
    <property type="project" value="UniProtKB-SubCell"/>
</dbReference>
<dbReference type="GO" id="GO:0005634">
    <property type="term" value="C:nucleus"/>
    <property type="evidence" value="ECO:0000318"/>
    <property type="project" value="GO_Central"/>
</dbReference>
<dbReference type="GO" id="GO:0005839">
    <property type="term" value="C:proteasome core complex"/>
    <property type="evidence" value="ECO:0000250"/>
    <property type="project" value="UniProtKB"/>
</dbReference>
<dbReference type="GO" id="GO:0019773">
    <property type="term" value="C:proteasome core complex, alpha-subunit complex"/>
    <property type="evidence" value="ECO:0000250"/>
    <property type="project" value="UniProtKB"/>
</dbReference>
<dbReference type="GO" id="GO:0043161">
    <property type="term" value="P:proteasome-mediated ubiquitin-dependent protein catabolic process"/>
    <property type="evidence" value="ECO:0000318"/>
    <property type="project" value="GO_Central"/>
</dbReference>
<dbReference type="CDD" id="cd03755">
    <property type="entry name" value="proteasome_alpha_type_7"/>
    <property type="match status" value="1"/>
</dbReference>
<dbReference type="FunFam" id="3.60.20.10:FF:000018">
    <property type="entry name" value="Proteasome subunit alpha type"/>
    <property type="match status" value="1"/>
</dbReference>
<dbReference type="Gene3D" id="3.60.20.10">
    <property type="entry name" value="Glutamine Phosphoribosylpyrophosphate, subunit 1, domain 1"/>
    <property type="match status" value="1"/>
</dbReference>
<dbReference type="InterPro" id="IPR029055">
    <property type="entry name" value="Ntn_hydrolases_N"/>
</dbReference>
<dbReference type="InterPro" id="IPR050115">
    <property type="entry name" value="Proteasome_alpha"/>
</dbReference>
<dbReference type="InterPro" id="IPR023332">
    <property type="entry name" value="Proteasome_alpha-type"/>
</dbReference>
<dbReference type="InterPro" id="IPR000426">
    <property type="entry name" value="Proteasome_asu_N"/>
</dbReference>
<dbReference type="InterPro" id="IPR001353">
    <property type="entry name" value="Proteasome_sua/b"/>
</dbReference>
<dbReference type="NCBIfam" id="NF003075">
    <property type="entry name" value="PRK03996.1"/>
    <property type="match status" value="1"/>
</dbReference>
<dbReference type="PANTHER" id="PTHR11599">
    <property type="entry name" value="PROTEASOME SUBUNIT ALPHA/BETA"/>
    <property type="match status" value="1"/>
</dbReference>
<dbReference type="Pfam" id="PF00227">
    <property type="entry name" value="Proteasome"/>
    <property type="match status" value="1"/>
</dbReference>
<dbReference type="Pfam" id="PF10584">
    <property type="entry name" value="Proteasome_A_N"/>
    <property type="match status" value="1"/>
</dbReference>
<dbReference type="SMART" id="SM00948">
    <property type="entry name" value="Proteasome_A_N"/>
    <property type="match status" value="1"/>
</dbReference>
<dbReference type="SUPFAM" id="SSF56235">
    <property type="entry name" value="N-terminal nucleophile aminohydrolases (Ntn hydrolases)"/>
    <property type="match status" value="1"/>
</dbReference>
<dbReference type="PROSITE" id="PS00388">
    <property type="entry name" value="PROTEASOME_ALPHA_1"/>
    <property type="match status" value="1"/>
</dbReference>
<dbReference type="PROSITE" id="PS51475">
    <property type="entry name" value="PROTEASOME_ALPHA_2"/>
    <property type="match status" value="1"/>
</dbReference>
<proteinExistence type="evidence at transcript level"/>
<evidence type="ECO:0000250" key="1"/>
<evidence type="ECO:0000250" key="2">
    <source>
        <dbReference type="UniProtKB" id="O14818"/>
    </source>
</evidence>
<evidence type="ECO:0000255" key="3">
    <source>
        <dbReference type="PROSITE-ProRule" id="PRU00808"/>
    </source>
</evidence>
<feature type="chain" id="PRO_0000124145" description="Proteasome subunit alpha type-7">
    <location>
        <begin position="1"/>
        <end position="249"/>
    </location>
</feature>
<gene>
    <name type="primary">PSMA7</name>
</gene>
<comment type="function">
    <text evidence="2">Component of the 20S core proteasome complex involved in the proteolytic degradation of most intracellular proteins. This complex plays numerous essential roles within the cell by associating with different regulatory particles. Associated with two 19S regulatory particles, forms the 26S proteasome and thus participates in the ATP-dependent degradation of ubiquitinated proteins. The 26S proteasome plays a key role in the maintenance of protein homeostasis by removing misfolded or damaged proteins that could impair cellular functions, and by removing proteins whose functions are no longer required. Associated with the PA200 or PA28, the 20S proteasome mediates ubiquitin-independent protein degradation. This type of proteolysis is required in several pathways including spermatogenesis (20S-PA200 complex) or generation of a subset of MHC class I-presented antigenic peptides (20S-PA28 complex). Inhibits the transactivation function of HIF-1A under both normoxic and hypoxia-mimicking conditions. The interaction with EMAP2 increases the proteasome-mediated HIF-1A degradation under the hypoxic conditions. Plays a role in hepatitis C virus internal ribosome entry site-mediated translation. Mediates nuclear translocation of the androgen receptor (AR) and thereby enhances androgen-mediated transactivation. Promotes MAVS degradation and thereby negatively regulates MAVS-mediated innate immune response.</text>
</comment>
<comment type="subunit">
    <text evidence="2">The 26S proteasome consists of a 20S proteasome core and two 19S regulatory subunits. The 20S proteasome core is a barrel-shaped complex made of 28 subunits that are arranged in four stacked rings. The two outer rings are each formed by seven alpha subunits, and the two inner rings are formed by seven beta subunits. The proteolytic activity is exerted by three beta-subunits PSMB5, PSMB6 and PSMB7. PSMA7 interacts directly with the PSMG1-PSMG2 heterodimer which promotes 20S proteasome assembly. Interacts with HIF1A. Interacts with RAB7A. Interacts with PRKN. Interacts with ABL1 and ABL2. Interacts with EMAP2. Interacts with MAVS.</text>
</comment>
<comment type="subcellular location">
    <subcellularLocation>
        <location evidence="1">Cytoplasm</location>
    </subcellularLocation>
    <subcellularLocation>
        <location evidence="1">Nucleus</location>
    </subcellularLocation>
</comment>
<comment type="similarity">
    <text evidence="3">Belongs to the peptidase T1A family.</text>
</comment>